<comment type="function">
    <text evidence="1">Cell wall formation. Catalyzes the transfer of a GlcNAc subunit on undecaprenyl-pyrophosphoryl-MurNAc-pentapeptide (lipid intermediate I) to form undecaprenyl-pyrophosphoryl-MurNAc-(pentapeptide)GlcNAc (lipid intermediate II).</text>
</comment>
<comment type="catalytic activity">
    <reaction evidence="1">
        <text>di-trans,octa-cis-undecaprenyl diphospho-N-acetyl-alpha-D-muramoyl-L-alanyl-D-glutamyl-meso-2,6-diaminopimeloyl-D-alanyl-D-alanine + UDP-N-acetyl-alpha-D-glucosamine = di-trans,octa-cis-undecaprenyl diphospho-[N-acetyl-alpha-D-glucosaminyl-(1-&gt;4)]-N-acetyl-alpha-D-muramoyl-L-alanyl-D-glutamyl-meso-2,6-diaminopimeloyl-D-alanyl-D-alanine + UDP + H(+)</text>
        <dbReference type="Rhea" id="RHEA:31227"/>
        <dbReference type="ChEBI" id="CHEBI:15378"/>
        <dbReference type="ChEBI" id="CHEBI:57705"/>
        <dbReference type="ChEBI" id="CHEBI:58223"/>
        <dbReference type="ChEBI" id="CHEBI:61387"/>
        <dbReference type="ChEBI" id="CHEBI:61388"/>
        <dbReference type="EC" id="2.4.1.227"/>
    </reaction>
</comment>
<comment type="pathway">
    <text evidence="1">Cell wall biogenesis; peptidoglycan biosynthesis.</text>
</comment>
<comment type="subcellular location">
    <subcellularLocation>
        <location evidence="1">Cell membrane</location>
        <topology evidence="1">Peripheral membrane protein</topology>
        <orientation evidence="1">Cytoplasmic side</orientation>
    </subcellularLocation>
</comment>
<comment type="similarity">
    <text evidence="1">Belongs to the glycosyltransferase 28 family. MurG subfamily.</text>
</comment>
<organism>
    <name type="scientific">Listeria monocytogenes serovar 1/2a (strain ATCC BAA-679 / EGD-e)</name>
    <dbReference type="NCBI Taxonomy" id="169963"/>
    <lineage>
        <taxon>Bacteria</taxon>
        <taxon>Bacillati</taxon>
        <taxon>Bacillota</taxon>
        <taxon>Bacilli</taxon>
        <taxon>Bacillales</taxon>
        <taxon>Listeriaceae</taxon>
        <taxon>Listeria</taxon>
    </lineage>
</organism>
<dbReference type="EC" id="2.4.1.227" evidence="1"/>
<dbReference type="EMBL" id="AL591982">
    <property type="protein sequence ID" value="CAD00113.1"/>
    <property type="molecule type" value="Genomic_DNA"/>
</dbReference>
<dbReference type="PIR" id="AC1329">
    <property type="entry name" value="AC1329"/>
</dbReference>
<dbReference type="RefSeq" id="NP_465559.1">
    <property type="nucleotide sequence ID" value="NC_003210.1"/>
</dbReference>
<dbReference type="RefSeq" id="WP_009930513.1">
    <property type="nucleotide sequence ID" value="NZ_CP149495.1"/>
</dbReference>
<dbReference type="SMR" id="Q8Y5M2"/>
<dbReference type="STRING" id="169963.gene:17594720"/>
<dbReference type="CAZy" id="GT28">
    <property type="family name" value="Glycosyltransferase Family 28"/>
</dbReference>
<dbReference type="PaxDb" id="169963-lmo2035"/>
<dbReference type="EnsemblBacteria" id="CAD00113">
    <property type="protein sequence ID" value="CAD00113"/>
    <property type="gene ID" value="CAD00113"/>
</dbReference>
<dbReference type="GeneID" id="984828"/>
<dbReference type="KEGG" id="lmo:lmo2035"/>
<dbReference type="PATRIC" id="fig|169963.11.peg.2083"/>
<dbReference type="eggNOG" id="COG0707">
    <property type="taxonomic scope" value="Bacteria"/>
</dbReference>
<dbReference type="HOGENOM" id="CLU_037404_0_1_9"/>
<dbReference type="OrthoDB" id="9808936at2"/>
<dbReference type="PhylomeDB" id="Q8Y5M2"/>
<dbReference type="BioCyc" id="LMON169963:LMO2035-MONOMER"/>
<dbReference type="UniPathway" id="UPA00219"/>
<dbReference type="Proteomes" id="UP000000817">
    <property type="component" value="Chromosome"/>
</dbReference>
<dbReference type="GO" id="GO:0005886">
    <property type="term" value="C:plasma membrane"/>
    <property type="evidence" value="ECO:0007669"/>
    <property type="project" value="UniProtKB-SubCell"/>
</dbReference>
<dbReference type="GO" id="GO:0016757">
    <property type="term" value="F:glycosyltransferase activity"/>
    <property type="evidence" value="ECO:0000318"/>
    <property type="project" value="GO_Central"/>
</dbReference>
<dbReference type="GO" id="GO:0051991">
    <property type="term" value="F:UDP-N-acetyl-D-glucosamine:N-acetylmuramoyl-L-alanyl-D-glutamyl-meso-2,6-diaminopimelyl-D-alanyl-D-alanine-diphosphoundecaprenol 4-beta-N-acetylglucosaminlytransferase activity"/>
    <property type="evidence" value="ECO:0007669"/>
    <property type="project" value="RHEA"/>
</dbReference>
<dbReference type="GO" id="GO:0050511">
    <property type="term" value="F:undecaprenyldiphospho-muramoylpentapeptide beta-N-acetylglucosaminyltransferase activity"/>
    <property type="evidence" value="ECO:0007669"/>
    <property type="project" value="UniProtKB-UniRule"/>
</dbReference>
<dbReference type="GO" id="GO:0005975">
    <property type="term" value="P:carbohydrate metabolic process"/>
    <property type="evidence" value="ECO:0007669"/>
    <property type="project" value="InterPro"/>
</dbReference>
<dbReference type="GO" id="GO:0051301">
    <property type="term" value="P:cell division"/>
    <property type="evidence" value="ECO:0007669"/>
    <property type="project" value="UniProtKB-KW"/>
</dbReference>
<dbReference type="GO" id="GO:0071555">
    <property type="term" value="P:cell wall organization"/>
    <property type="evidence" value="ECO:0007669"/>
    <property type="project" value="UniProtKB-KW"/>
</dbReference>
<dbReference type="GO" id="GO:0030259">
    <property type="term" value="P:lipid glycosylation"/>
    <property type="evidence" value="ECO:0007669"/>
    <property type="project" value="UniProtKB-UniRule"/>
</dbReference>
<dbReference type="GO" id="GO:0009252">
    <property type="term" value="P:peptidoglycan biosynthetic process"/>
    <property type="evidence" value="ECO:0007669"/>
    <property type="project" value="UniProtKB-UniRule"/>
</dbReference>
<dbReference type="GO" id="GO:0008360">
    <property type="term" value="P:regulation of cell shape"/>
    <property type="evidence" value="ECO:0007669"/>
    <property type="project" value="UniProtKB-KW"/>
</dbReference>
<dbReference type="CDD" id="cd03785">
    <property type="entry name" value="GT28_MurG"/>
    <property type="match status" value="1"/>
</dbReference>
<dbReference type="Gene3D" id="3.40.50.2000">
    <property type="entry name" value="Glycogen Phosphorylase B"/>
    <property type="match status" value="2"/>
</dbReference>
<dbReference type="HAMAP" id="MF_00033">
    <property type="entry name" value="MurG"/>
    <property type="match status" value="1"/>
</dbReference>
<dbReference type="InterPro" id="IPR006009">
    <property type="entry name" value="GlcNAc_MurG"/>
</dbReference>
<dbReference type="InterPro" id="IPR007235">
    <property type="entry name" value="Glyco_trans_28_C"/>
</dbReference>
<dbReference type="InterPro" id="IPR004276">
    <property type="entry name" value="GlycoTrans_28_N"/>
</dbReference>
<dbReference type="NCBIfam" id="TIGR01133">
    <property type="entry name" value="murG"/>
    <property type="match status" value="1"/>
</dbReference>
<dbReference type="PANTHER" id="PTHR21015:SF22">
    <property type="entry name" value="GLYCOSYLTRANSFERASE"/>
    <property type="match status" value="1"/>
</dbReference>
<dbReference type="PANTHER" id="PTHR21015">
    <property type="entry name" value="UDP-N-ACETYLGLUCOSAMINE--N-ACETYLMURAMYL-(PENTAPEPTIDE) PYROPHOSPHORYL-UNDECAPRENOL N-ACETYLGLUCOSAMINE TRANSFERASE 1"/>
    <property type="match status" value="1"/>
</dbReference>
<dbReference type="Pfam" id="PF04101">
    <property type="entry name" value="Glyco_tran_28_C"/>
    <property type="match status" value="1"/>
</dbReference>
<dbReference type="Pfam" id="PF03033">
    <property type="entry name" value="Glyco_transf_28"/>
    <property type="match status" value="1"/>
</dbReference>
<dbReference type="SUPFAM" id="SSF53756">
    <property type="entry name" value="UDP-Glycosyltransferase/glycogen phosphorylase"/>
    <property type="match status" value="1"/>
</dbReference>
<name>MURG_LISMO</name>
<evidence type="ECO:0000255" key="1">
    <source>
        <dbReference type="HAMAP-Rule" id="MF_00033"/>
    </source>
</evidence>
<sequence>MKVAISGGGTGGHVYPALALIRELKKSHPEAEFLYIGTEKGLEAGIVKREGIPFEAIEITGFKRSLSLENIKTVMRFLSGAKKSKQILRDFKPDVVIGTGGYVCGPVVYAAAKLKIPTLIHEQNSVAGLTNKFLSRYTDKVAICFEEVSDSFASEKIVFTGNPRASEVVGVDSEGALEAYGLVSGKPTVLVFGGSRGARGVNEAVEAVLPEWNNRDFQLLYVTGDVHYEKIKDSLAELNLGNHISVQPFIYDMPKILNAVTLVVSRAGATTLAELTALGVPSILIPSPYVTANHQENNARALEKNNAAIVITEAELKNTDLMATVDSILNDEAKLNSMKLSAKQMGRPDAAAKLVEAVLSIMK</sequence>
<reference key="1">
    <citation type="journal article" date="2001" name="Science">
        <title>Comparative genomics of Listeria species.</title>
        <authorList>
            <person name="Glaser P."/>
            <person name="Frangeul L."/>
            <person name="Buchrieser C."/>
            <person name="Rusniok C."/>
            <person name="Amend A."/>
            <person name="Baquero F."/>
            <person name="Berche P."/>
            <person name="Bloecker H."/>
            <person name="Brandt P."/>
            <person name="Chakraborty T."/>
            <person name="Charbit A."/>
            <person name="Chetouani F."/>
            <person name="Couve E."/>
            <person name="de Daruvar A."/>
            <person name="Dehoux P."/>
            <person name="Domann E."/>
            <person name="Dominguez-Bernal G."/>
            <person name="Duchaud E."/>
            <person name="Durant L."/>
            <person name="Dussurget O."/>
            <person name="Entian K.-D."/>
            <person name="Fsihi H."/>
            <person name="Garcia-del Portillo F."/>
            <person name="Garrido P."/>
            <person name="Gautier L."/>
            <person name="Goebel W."/>
            <person name="Gomez-Lopez N."/>
            <person name="Hain T."/>
            <person name="Hauf J."/>
            <person name="Jackson D."/>
            <person name="Jones L.-M."/>
            <person name="Kaerst U."/>
            <person name="Kreft J."/>
            <person name="Kuhn M."/>
            <person name="Kunst F."/>
            <person name="Kurapkat G."/>
            <person name="Madueno E."/>
            <person name="Maitournam A."/>
            <person name="Mata Vicente J."/>
            <person name="Ng E."/>
            <person name="Nedjari H."/>
            <person name="Nordsiek G."/>
            <person name="Novella S."/>
            <person name="de Pablos B."/>
            <person name="Perez-Diaz J.-C."/>
            <person name="Purcell R."/>
            <person name="Remmel B."/>
            <person name="Rose M."/>
            <person name="Schlueter T."/>
            <person name="Simoes N."/>
            <person name="Tierrez A."/>
            <person name="Vazquez-Boland J.-A."/>
            <person name="Voss H."/>
            <person name="Wehland J."/>
            <person name="Cossart P."/>
        </authorList>
    </citation>
    <scope>NUCLEOTIDE SEQUENCE [LARGE SCALE GENOMIC DNA]</scope>
    <source>
        <strain>ATCC BAA-679 / EGD-e</strain>
    </source>
</reference>
<keyword id="KW-0131">Cell cycle</keyword>
<keyword id="KW-0132">Cell division</keyword>
<keyword id="KW-1003">Cell membrane</keyword>
<keyword id="KW-0133">Cell shape</keyword>
<keyword id="KW-0961">Cell wall biogenesis/degradation</keyword>
<keyword id="KW-0328">Glycosyltransferase</keyword>
<keyword id="KW-0472">Membrane</keyword>
<keyword id="KW-0573">Peptidoglycan synthesis</keyword>
<keyword id="KW-1185">Reference proteome</keyword>
<keyword id="KW-0808">Transferase</keyword>
<accession>Q8Y5M2</accession>
<gene>
    <name evidence="1" type="primary">murG</name>
    <name type="ordered locus">lmo2035</name>
</gene>
<protein>
    <recommendedName>
        <fullName evidence="1">UDP-N-acetylglucosamine--N-acetylmuramyl-(pentapeptide) pyrophosphoryl-undecaprenol N-acetylglucosamine transferase</fullName>
        <ecNumber evidence="1">2.4.1.227</ecNumber>
    </recommendedName>
    <alternativeName>
        <fullName evidence="1">Undecaprenyl-PP-MurNAc-pentapeptide-UDPGlcNAc GlcNAc transferase</fullName>
    </alternativeName>
</protein>
<feature type="chain" id="PRO_0000109185" description="UDP-N-acetylglucosamine--N-acetylmuramyl-(pentapeptide) pyrophosphoryl-undecaprenol N-acetylglucosamine transferase">
    <location>
        <begin position="1"/>
        <end position="363"/>
    </location>
</feature>
<feature type="binding site" evidence="1">
    <location>
        <begin position="10"/>
        <end position="12"/>
    </location>
    <ligand>
        <name>UDP-N-acetyl-alpha-D-glucosamine</name>
        <dbReference type="ChEBI" id="CHEBI:57705"/>
    </ligand>
</feature>
<feature type="binding site" evidence="1">
    <location>
        <position position="124"/>
    </location>
    <ligand>
        <name>UDP-N-acetyl-alpha-D-glucosamine</name>
        <dbReference type="ChEBI" id="CHEBI:57705"/>
    </ligand>
</feature>
<feature type="binding site" evidence="1">
    <location>
        <position position="195"/>
    </location>
    <ligand>
        <name>UDP-N-acetyl-alpha-D-glucosamine</name>
        <dbReference type="ChEBI" id="CHEBI:57705"/>
    </ligand>
</feature>
<feature type="binding site" evidence="1">
    <location>
        <position position="250"/>
    </location>
    <ligand>
        <name>UDP-N-acetyl-alpha-D-glucosamine</name>
        <dbReference type="ChEBI" id="CHEBI:57705"/>
    </ligand>
</feature>
<feature type="binding site" evidence="1">
    <location>
        <position position="295"/>
    </location>
    <ligand>
        <name>UDP-N-acetyl-alpha-D-glucosamine</name>
        <dbReference type="ChEBI" id="CHEBI:57705"/>
    </ligand>
</feature>
<proteinExistence type="inferred from homology"/>